<organism>
    <name type="scientific">Bacteroides fragilis (strain ATCC 25285 / DSM 2151 / CCUG 4856 / JCM 11019 / LMG 10263 / NCTC 9343 / Onslow / VPI 2553 / EN-2)</name>
    <dbReference type="NCBI Taxonomy" id="272559"/>
    <lineage>
        <taxon>Bacteria</taxon>
        <taxon>Pseudomonadati</taxon>
        <taxon>Bacteroidota</taxon>
        <taxon>Bacteroidia</taxon>
        <taxon>Bacteroidales</taxon>
        <taxon>Bacteroidaceae</taxon>
        <taxon>Bacteroides</taxon>
    </lineage>
</organism>
<evidence type="ECO:0000255" key="1">
    <source>
        <dbReference type="HAMAP-Rule" id="MF_00002"/>
    </source>
</evidence>
<keyword id="KW-0479">Metal-binding</keyword>
<keyword id="KW-0665">Pyrimidine biosynthesis</keyword>
<keyword id="KW-0862">Zinc</keyword>
<feature type="chain" id="PRO_1000000026" description="Aspartate carbamoyltransferase regulatory chain">
    <location>
        <begin position="1"/>
        <end position="153"/>
    </location>
</feature>
<feature type="binding site" evidence="1">
    <location>
        <position position="110"/>
    </location>
    <ligand>
        <name>Zn(2+)</name>
        <dbReference type="ChEBI" id="CHEBI:29105"/>
    </ligand>
</feature>
<feature type="binding site" evidence="1">
    <location>
        <position position="115"/>
    </location>
    <ligand>
        <name>Zn(2+)</name>
        <dbReference type="ChEBI" id="CHEBI:29105"/>
    </ligand>
</feature>
<feature type="binding site" evidence="1">
    <location>
        <position position="138"/>
    </location>
    <ligand>
        <name>Zn(2+)</name>
        <dbReference type="ChEBI" id="CHEBI:29105"/>
    </ligand>
</feature>
<feature type="binding site" evidence="1">
    <location>
        <position position="141"/>
    </location>
    <ligand>
        <name>Zn(2+)</name>
        <dbReference type="ChEBI" id="CHEBI:29105"/>
    </ligand>
</feature>
<comment type="function">
    <text evidence="1">Involved in allosteric regulation of aspartate carbamoyltransferase.</text>
</comment>
<comment type="cofactor">
    <cofactor evidence="1">
        <name>Zn(2+)</name>
        <dbReference type="ChEBI" id="CHEBI:29105"/>
    </cofactor>
    <text evidence="1">Binds 1 zinc ion per subunit.</text>
</comment>
<comment type="subunit">
    <text evidence="1">Contains catalytic and regulatory chains.</text>
</comment>
<comment type="similarity">
    <text evidence="1">Belongs to the PyrI family.</text>
</comment>
<name>PYRI_BACFN</name>
<sequence length="153" mass="17363">MSENKQALQVAALKNGTVIDHIPSEKLFTVVSLLGLEHMTTNITIGFNLDSKKLGKKGIIKIADKFFCDEEINRISVVAPHVKLNIIRDYEVVEKKEVRMPDELKAIVKCANPKCITNNEPMATLFHVIDKDNCVIKCHYCEKEQKREDITII</sequence>
<accession>Q5LD55</accession>
<proteinExistence type="inferred from homology"/>
<gene>
    <name evidence="1" type="primary">pyrI</name>
    <name type="ordered locus">BF2261</name>
</gene>
<dbReference type="EMBL" id="CR626927">
    <property type="protein sequence ID" value="CAH07955.1"/>
    <property type="molecule type" value="Genomic_DNA"/>
</dbReference>
<dbReference type="RefSeq" id="WP_005787546.1">
    <property type="nucleotide sequence ID" value="NZ_UFTH01000001.1"/>
</dbReference>
<dbReference type="SMR" id="Q5LD55"/>
<dbReference type="PaxDb" id="272559-BF9343_2174"/>
<dbReference type="GeneID" id="60369356"/>
<dbReference type="KEGG" id="bfs:BF9343_2174"/>
<dbReference type="eggNOG" id="COG1781">
    <property type="taxonomic scope" value="Bacteria"/>
</dbReference>
<dbReference type="HOGENOM" id="CLU_128576_0_0_10"/>
<dbReference type="Proteomes" id="UP000006731">
    <property type="component" value="Chromosome"/>
</dbReference>
<dbReference type="GO" id="GO:0009347">
    <property type="term" value="C:aspartate carbamoyltransferase complex"/>
    <property type="evidence" value="ECO:0007669"/>
    <property type="project" value="InterPro"/>
</dbReference>
<dbReference type="GO" id="GO:0046872">
    <property type="term" value="F:metal ion binding"/>
    <property type="evidence" value="ECO:0007669"/>
    <property type="project" value="UniProtKB-KW"/>
</dbReference>
<dbReference type="GO" id="GO:0006207">
    <property type="term" value="P:'de novo' pyrimidine nucleobase biosynthetic process"/>
    <property type="evidence" value="ECO:0007669"/>
    <property type="project" value="InterPro"/>
</dbReference>
<dbReference type="GO" id="GO:0006221">
    <property type="term" value="P:pyrimidine nucleotide biosynthetic process"/>
    <property type="evidence" value="ECO:0007669"/>
    <property type="project" value="UniProtKB-UniRule"/>
</dbReference>
<dbReference type="Gene3D" id="2.30.30.20">
    <property type="entry name" value="Aspartate carbamoyltransferase regulatory subunit, C-terminal domain"/>
    <property type="match status" value="1"/>
</dbReference>
<dbReference type="Gene3D" id="3.30.70.140">
    <property type="entry name" value="Aspartate carbamoyltransferase regulatory subunit, N-terminal domain"/>
    <property type="match status" value="1"/>
</dbReference>
<dbReference type="HAMAP" id="MF_00002">
    <property type="entry name" value="Asp_carb_tr_reg"/>
    <property type="match status" value="1"/>
</dbReference>
<dbReference type="InterPro" id="IPR020545">
    <property type="entry name" value="Asp_carbamoyltransf_reg_N"/>
</dbReference>
<dbReference type="InterPro" id="IPR002801">
    <property type="entry name" value="Asp_carbamoylTrfase_reg"/>
</dbReference>
<dbReference type="InterPro" id="IPR020542">
    <property type="entry name" value="Asp_carbamoyltrfase_reg_C"/>
</dbReference>
<dbReference type="InterPro" id="IPR036792">
    <property type="entry name" value="Asp_carbatrfase_reg_C_sf"/>
</dbReference>
<dbReference type="InterPro" id="IPR036793">
    <property type="entry name" value="Asp_carbatrfase_reg_N_sf"/>
</dbReference>
<dbReference type="NCBIfam" id="TIGR00240">
    <property type="entry name" value="ATCase_reg"/>
    <property type="match status" value="1"/>
</dbReference>
<dbReference type="PANTHER" id="PTHR35805">
    <property type="entry name" value="ASPARTATE CARBAMOYLTRANSFERASE REGULATORY CHAIN"/>
    <property type="match status" value="1"/>
</dbReference>
<dbReference type="PANTHER" id="PTHR35805:SF1">
    <property type="entry name" value="ASPARTATE CARBAMOYLTRANSFERASE REGULATORY CHAIN"/>
    <property type="match status" value="1"/>
</dbReference>
<dbReference type="Pfam" id="PF01948">
    <property type="entry name" value="PyrI"/>
    <property type="match status" value="1"/>
</dbReference>
<dbReference type="Pfam" id="PF02748">
    <property type="entry name" value="PyrI_C"/>
    <property type="match status" value="1"/>
</dbReference>
<dbReference type="SUPFAM" id="SSF57825">
    <property type="entry name" value="Aspartate carbamoyltransferase, Regulatory-chain, C-terminal domain"/>
    <property type="match status" value="1"/>
</dbReference>
<dbReference type="SUPFAM" id="SSF54893">
    <property type="entry name" value="Aspartate carbamoyltransferase, Regulatory-chain, N-terminal domain"/>
    <property type="match status" value="1"/>
</dbReference>
<protein>
    <recommendedName>
        <fullName evidence="1">Aspartate carbamoyltransferase regulatory chain</fullName>
    </recommendedName>
</protein>
<reference key="1">
    <citation type="journal article" date="2005" name="Science">
        <title>Extensive DNA inversions in the B. fragilis genome control variable gene expression.</title>
        <authorList>
            <person name="Cerdeno-Tarraga A.-M."/>
            <person name="Patrick S."/>
            <person name="Crossman L.C."/>
            <person name="Blakely G."/>
            <person name="Abratt V."/>
            <person name="Lennard N."/>
            <person name="Poxton I."/>
            <person name="Duerden B."/>
            <person name="Harris B."/>
            <person name="Quail M.A."/>
            <person name="Barron A."/>
            <person name="Clark L."/>
            <person name="Corton C."/>
            <person name="Doggett J."/>
            <person name="Holden M.T.G."/>
            <person name="Larke N."/>
            <person name="Line A."/>
            <person name="Lord A."/>
            <person name="Norbertczak H."/>
            <person name="Ormond D."/>
            <person name="Price C."/>
            <person name="Rabbinowitsch E."/>
            <person name="Woodward J."/>
            <person name="Barrell B.G."/>
            <person name="Parkhill J."/>
        </authorList>
    </citation>
    <scope>NUCLEOTIDE SEQUENCE [LARGE SCALE GENOMIC DNA]</scope>
    <source>
        <strain>ATCC 25285 / DSM 2151 / CCUG 4856 / JCM 11019 / LMG 10263 / NCTC 9343 / Onslow / VPI 2553 / EN-2</strain>
    </source>
</reference>